<organism>
    <name type="scientific">Mycobacterium tuberculosis (strain CDC 1551 / Oshkosh)</name>
    <dbReference type="NCBI Taxonomy" id="83331"/>
    <lineage>
        <taxon>Bacteria</taxon>
        <taxon>Bacillati</taxon>
        <taxon>Actinomycetota</taxon>
        <taxon>Actinomycetes</taxon>
        <taxon>Mycobacteriales</taxon>
        <taxon>Mycobacteriaceae</taxon>
        <taxon>Mycobacterium</taxon>
        <taxon>Mycobacterium tuberculosis complex</taxon>
    </lineage>
</organism>
<sequence>MTRQQLDVQVKNGGLVRVWYGVYAAQEPDLLGRLAALDVFMGGHAVACLGTAAALYGFDTENTVAIHMLDPGVRMRPTVGLMVHQRVGARLQRVSGRLATAPAWTAVEVARQLRRPRALATLDAALRSMRCARSEIENAVAEQRGRRGIVAARELLPFADGRAESAMESEARLVMIDHGLPLPELQYPIHGHGGEMWRVDFAWPDMRLAAEYESIEWHAGPAEMLRDKTRWAKLQELGWTIVPIVVDDVRREPGRLAARIARHLDRARMAG</sequence>
<accession>P9WLG4</accession>
<accession>L0TAM2</accession>
<accession>Q10526</accession>
<protein>
    <recommendedName>
        <fullName>Uncharacterized protein MT2308</fullName>
    </recommendedName>
</protein>
<reference key="1">
    <citation type="journal article" date="2002" name="J. Bacteriol.">
        <title>Whole-genome comparison of Mycobacterium tuberculosis clinical and laboratory strains.</title>
        <authorList>
            <person name="Fleischmann R.D."/>
            <person name="Alland D."/>
            <person name="Eisen J.A."/>
            <person name="Carpenter L."/>
            <person name="White O."/>
            <person name="Peterson J.D."/>
            <person name="DeBoy R.T."/>
            <person name="Dodson R.J."/>
            <person name="Gwinn M.L."/>
            <person name="Haft D.H."/>
            <person name="Hickey E.K."/>
            <person name="Kolonay J.F."/>
            <person name="Nelson W.C."/>
            <person name="Umayam L.A."/>
            <person name="Ermolaeva M.D."/>
            <person name="Salzberg S.L."/>
            <person name="Delcher A."/>
            <person name="Utterback T.R."/>
            <person name="Weidman J.F."/>
            <person name="Khouri H.M."/>
            <person name="Gill J."/>
            <person name="Mikula A."/>
            <person name="Bishai W."/>
            <person name="Jacobs W.R. Jr."/>
            <person name="Venter J.C."/>
            <person name="Fraser C.M."/>
        </authorList>
    </citation>
    <scope>NUCLEOTIDE SEQUENCE [LARGE SCALE GENOMIC DNA]</scope>
    <source>
        <strain>CDC 1551 / Oshkosh</strain>
    </source>
</reference>
<gene>
    <name type="ordered locus">MT2308</name>
</gene>
<dbReference type="EMBL" id="AE000516">
    <property type="protein sequence ID" value="AAK46592.1"/>
    <property type="molecule type" value="Genomic_DNA"/>
</dbReference>
<dbReference type="PIR" id="D70779">
    <property type="entry name" value="D70779"/>
</dbReference>
<dbReference type="SMR" id="P9WLG4"/>
<dbReference type="KEGG" id="mtc:MT2308"/>
<dbReference type="PATRIC" id="fig|83331.31.peg.2485"/>
<dbReference type="HOGENOM" id="CLU_052626_6_0_11"/>
<dbReference type="Proteomes" id="UP000001020">
    <property type="component" value="Chromosome"/>
</dbReference>
<dbReference type="FunFam" id="3.40.960.10:FF:000005">
    <property type="entry name" value="Cullin, a subunit of E3 ubiquitin ligase"/>
    <property type="match status" value="1"/>
</dbReference>
<dbReference type="Gene3D" id="3.40.960.10">
    <property type="entry name" value="VSR Endonuclease"/>
    <property type="match status" value="1"/>
</dbReference>
<dbReference type="InterPro" id="IPR011335">
    <property type="entry name" value="Restrct_endonuc-II-like"/>
</dbReference>
<dbReference type="SUPFAM" id="SSF52980">
    <property type="entry name" value="Restriction endonuclease-like"/>
    <property type="match status" value="1"/>
</dbReference>
<feature type="chain" id="PRO_0000427483" description="Uncharacterized protein MT2308">
    <location>
        <begin position="1"/>
        <end position="271"/>
    </location>
</feature>
<proteinExistence type="predicted"/>
<name>Y2248_MYCTO</name>
<keyword id="KW-1185">Reference proteome</keyword>